<reference key="1">
    <citation type="journal article" date="2001" name="Appl. Environ. Microbiol.">
        <title>A large gene cluster encoding several magnetosome proteins is conserved in different species of magnetotactic bacteria.</title>
        <authorList>
            <person name="Grunberg K."/>
            <person name="Wawer C."/>
            <person name="Tebo B.M."/>
            <person name="Schuler D."/>
        </authorList>
    </citation>
    <scope>NUCLEOTIDE SEQUENCE [GENOMIC DNA]</scope>
    <scope>PROTEIN SEQUENCE OF 1-21</scope>
    <scope>SUBCELLULAR LOCATION</scope>
    <source>
        <strain>DSM 6361 / JCM 21280 / NBRC 15271 / MSR-1</strain>
    </source>
</reference>
<reference key="2">
    <citation type="journal article" date="2003" name="J. Bacteriol.">
        <title>Characterization of a spontaneous nonmagnetic mutant of Magnetospirillum gryphiswaldense reveals a large deletion comprising a putative magnetosome island.</title>
        <authorList>
            <person name="Schuebbe S."/>
            <person name="Kube M."/>
            <person name="Scheffel A."/>
            <person name="Wawer C."/>
            <person name="Heyen U."/>
            <person name="Meyerdierks A."/>
            <person name="Madkour M.H."/>
            <person name="Mayer F."/>
            <person name="Reinhardt R."/>
            <person name="Schueler D."/>
        </authorList>
    </citation>
    <scope>NUCLEOTIDE SEQUENCE [GENOMIC DNA]</scope>
    <scope>PROBABLE OPERON</scope>
    <scope>DISRUPTION PHENOTYPE</scope>
    <source>
        <strain>DSM 6361 / JCM 21280 / NBRC 15271 / MSR-1</strain>
    </source>
</reference>
<reference key="3">
    <citation type="journal article" date="2005" name="J. Bacteriol.">
        <title>A hypervariable 130-kilobase genomic region of Magnetospirillum gryphiswaldense comprises a magnetosome island which undergoes frequent rearrangements during stationary growth.</title>
        <authorList>
            <person name="Ullrich S."/>
            <person name="Kube M."/>
            <person name="Schuebbe S."/>
            <person name="Reinhardt R."/>
            <person name="Schueler D."/>
        </authorList>
    </citation>
    <scope>NUCLEOTIDE SEQUENCE [GENOMIC DNA]</scope>
    <source>
        <strain>DSM 6361 / JCM 21280 / NBRC 15271 / MSR-1</strain>
    </source>
</reference>
<reference key="4">
    <citation type="journal article" date="2007" name="J. Bacteriol.">
        <title>Comparative genome analysis of four magnetotactic bacteria reveals a complex set of group-specific genes implicated in magnetosome biomineralization and function.</title>
        <authorList>
            <person name="Richter M."/>
            <person name="Kube M."/>
            <person name="Bazylinski D.A."/>
            <person name="Lombardot T."/>
            <person name="Gloeckner F.O."/>
            <person name="Reinhardt R."/>
            <person name="Schueler D."/>
        </authorList>
    </citation>
    <scope>NUCLEOTIDE SEQUENCE [LARGE SCALE GENOMIC DNA]</scope>
    <source>
        <strain>DSM 6361 / JCM 21280 / NBRC 15271 / MSR-1</strain>
    </source>
</reference>
<reference key="5">
    <citation type="journal article" date="2014" name="Genome Announc.">
        <title>Complete genome sequence of Magnetospirillum gryphiswaldense MSR-1.</title>
        <authorList>
            <person name="Wang X."/>
            <person name="Wang Q."/>
            <person name="Zhang W."/>
            <person name="Wang Y."/>
            <person name="Li L."/>
            <person name="Wen T."/>
            <person name="Zhang T."/>
            <person name="Zhang Y."/>
            <person name="Xu J."/>
            <person name="Hu J."/>
            <person name="Li S."/>
            <person name="Liu L."/>
            <person name="Liu J."/>
            <person name="Jiang W."/>
            <person name="Tian J."/>
            <person name="Li Y."/>
            <person name="Schuler D."/>
            <person name="Wang L."/>
            <person name="Li J."/>
        </authorList>
    </citation>
    <scope>NUCLEOTIDE SEQUENCE [LARGE SCALE GENOMIC DNA]</scope>
    <source>
        <strain>DSM 6361 / JCM 21280 / NBRC 15271 / MSR-1</strain>
    </source>
</reference>
<reference key="6">
    <citation type="journal article" date="2004" name="Appl. Environ. Microbiol.">
        <title>Biochemical and proteomic analysis of the magnetosome membrane in Magnetospirillum gryphiswaldense.</title>
        <authorList>
            <person name="Gruenberg K."/>
            <person name="Mueller E.C."/>
            <person name="Otto A."/>
            <person name="Reszka R."/>
            <person name="Linder D."/>
            <person name="Kube M."/>
            <person name="Reinhardt R."/>
            <person name="Schueler D."/>
        </authorList>
    </citation>
    <scope>PROTEIN SEQUENCE OF 1-12</scope>
    <scope>SUBCELLULAR LOCATION</scope>
    <scope>IDENTIFICATION BY MASS SPECTROMETRY</scope>
    <source>
        <strain>DSM 6361 / JCM 21280 / NBRC 15271 / MSR-1</strain>
    </source>
</reference>
<reference key="7">
    <citation type="journal article" date="2011" name="Mol. Microbiol.">
        <title>The cation diffusion facilitator proteins MamB and MamM of Magnetospirillum gryphiswaldense have distinct and complex functions, and are involved in magnetite biomineralization and magnetosome membrane assembly.</title>
        <authorList>
            <person name="Uebe R."/>
            <person name="Junge K."/>
            <person name="Henn V."/>
            <person name="Poxleitner G."/>
            <person name="Katzmann E."/>
            <person name="Plitzko J.M."/>
            <person name="Zarivach R."/>
            <person name="Kasama T."/>
            <person name="Wanner G."/>
            <person name="Posfai M."/>
            <person name="Boettger L."/>
            <person name="Matzanke B."/>
            <person name="Schueler D."/>
        </authorList>
    </citation>
    <scope>FUNCTION</scope>
    <scope>SUBUNIT</scope>
    <scope>SUBCELLULAR LOCATION</scope>
    <scope>DISRUPTION PHENOTYPE</scope>
    <scope>MUTAGENESIS OF CYS-6; CYS-9; HIS-46; ASP-50; CYS-138; ASP-154; ASP-158; 288-PRO--VAL-297 AND 293-VAL--VAL-297</scope>
    <source>
        <strain>DSM 6361 / JCM 21280 / NBRC 15271 / MSR-1</strain>
    </source>
</reference>
<reference key="8">
    <citation type="journal article" date="2011" name="PLoS ONE">
        <title>Functional analysis of the magnetosome island in Magnetospirillum gryphiswaldense: the mamAB operon is sufficient for magnetite biomineralization.</title>
        <authorList>
            <person name="Lohsse A."/>
            <person name="Ullrich S."/>
            <person name="Katzmann E."/>
            <person name="Borg S."/>
            <person name="Wanner G."/>
            <person name="Richter M."/>
            <person name="Voigt B."/>
            <person name="Schweder T."/>
            <person name="Schueler D."/>
        </authorList>
    </citation>
    <scope>MINIMAL MAGNETOSOME ISLAND</scope>
    <source>
        <strain>DSM 6361 / JCM 21280 / NBRC 15271 / MSR-1</strain>
    </source>
</reference>
<reference key="9">
    <citation type="journal article" date="2016" name="PLoS Genet.">
        <title>Genetic and Ultrastructural Analysis Reveals the Key Players and Initial Steps of Bacterial Magnetosome Membrane Biogenesis.</title>
        <authorList>
            <person name="Raschdorf O."/>
            <person name="Forstner Y."/>
            <person name="Kolinko I."/>
            <person name="Uebe R."/>
            <person name="Plitzko J.M."/>
            <person name="Schueler D."/>
        </authorList>
    </citation>
    <scope>FUNCTION</scope>
    <scope>MINIMAL VESICLE FORMATION GENES</scope>
    <scope>DEVELOPMENTAL STAGE</scope>
    <scope>DISRUPTION PHENOTYPE</scope>
    <source>
        <strain>DSM 6361 / JCM 21280 / NBRC 15271 / MSR-1</strain>
    </source>
</reference>
<reference key="10">
    <citation type="journal article" date="2018" name="Mol. Microbiol.">
        <title>The dual role of MamB in magnetosome membrane assembly and magnetite biomineralization.</title>
        <authorList>
            <person name="Uebe R."/>
            <person name="Keren-Khadmy N."/>
            <person name="Zeytuni N."/>
            <person name="Katzmann E."/>
            <person name="Navon Y."/>
            <person name="Davidov G."/>
            <person name="Bitton R."/>
            <person name="Plitzko J.M."/>
            <person name="Schuler D."/>
            <person name="Zarivach R."/>
        </authorList>
    </citation>
    <scope>FUNCTION</scope>
    <scope>MINIMAL VESICLE FORMATION GENES</scope>
    <scope>SUBUNIT</scope>
    <scope>DISRUPTION PHENOTYPE</scope>
    <scope>DOMAIN</scope>
    <scope>MUTAGENESIS OF ASP-247</scope>
    <source>
        <strain>DSM 6361 / JCM 21280 / NBRC 15271 / MSR-1</strain>
    </source>
</reference>
<proteinExistence type="evidence at protein level"/>
<feature type="chain" id="PRO_0000447736" description="Magnetosome protein MamB">
    <location>
        <begin position="1"/>
        <end position="297"/>
    </location>
</feature>
<feature type="topological domain" description="Cytoplasmic" evidence="11">
    <location>
        <begin position="1"/>
        <end position="12"/>
    </location>
</feature>
<feature type="transmembrane region" description="Helical" evidence="2">
    <location>
        <begin position="13"/>
        <end position="33"/>
    </location>
</feature>
<feature type="topological domain" description="Lumenal" evidence="11">
    <location>
        <begin position="34"/>
        <end position="83"/>
    </location>
</feature>
<feature type="transmembrane region" description="Helical" evidence="2">
    <location>
        <begin position="84"/>
        <end position="104"/>
    </location>
</feature>
<feature type="topological domain" description="Cytoplasmic" evidence="11">
    <location>
        <begin position="105"/>
        <end position="112"/>
    </location>
</feature>
<feature type="transmembrane region" description="Helical" evidence="2">
    <location>
        <begin position="113"/>
        <end position="133"/>
    </location>
</feature>
<feature type="topological domain" description="Lumenal" evidence="11">
    <location>
        <begin position="134"/>
        <end position="164"/>
    </location>
</feature>
<feature type="transmembrane region" description="Helical" evidence="2">
    <location>
        <begin position="165"/>
        <end position="185"/>
    </location>
</feature>
<feature type="topological domain" description="Cytoplasmic" evidence="11">
    <location>
        <begin position="186"/>
        <end position="297"/>
    </location>
</feature>
<feature type="region of interest" description="Transmembrane domain (TMD)" evidence="15">
    <location>
        <begin position="1"/>
        <end position="214"/>
    </location>
</feature>
<feature type="region of interest" description="C-terminal domain (CTD)" evidence="15">
    <location>
        <begin position="215"/>
        <end position="297"/>
    </location>
</feature>
<feature type="mutagenesis site" description="Loss of magnetic response." evidence="6">
    <original>C</original>
    <variation>S</variation>
    <location>
        <position position="6"/>
    </location>
</feature>
<feature type="mutagenesis site" description="Loss of magnetic response." evidence="6">
    <original>C</original>
    <variation>S</variation>
    <location>
        <position position="9"/>
    </location>
</feature>
<feature type="mutagenesis site" description="Loss of magnetic response." evidence="6">
    <original>H</original>
    <variation>A</variation>
    <location>
        <position position="46"/>
    </location>
</feature>
<feature type="mutagenesis site" description="Loss of magnetic response. MamD is correctly localized, magnetosome vesicles form but are empty." evidence="6 9">
    <original>D</original>
    <variation>A</variation>
    <location>
        <position position="50"/>
    </location>
</feature>
<feature type="mutagenesis site" description="Loss of magnetic response." evidence="6">
    <original>D</original>
    <variation>E</variation>
    <location>
        <position position="50"/>
    </location>
</feature>
<feature type="mutagenesis site" description="Loss of magnetic response, decreased protein oligomerization." evidence="6">
    <original>C</original>
    <variation>A</variation>
    <location>
        <position position="138"/>
    </location>
</feature>
<feature type="mutagenesis site" description="Loss of magnetic response." evidence="6">
    <original>D</original>
    <variation>A</variation>
    <location>
        <position position="154"/>
    </location>
</feature>
<feature type="mutagenesis site" description="Loss of magnetic response." evidence="6">
    <original>D</original>
    <variation>A</variation>
    <location>
        <position position="158"/>
    </location>
</feature>
<feature type="mutagenesis site" description="About 30% fewer magnetite particles per cell, their size is normal." evidence="9">
    <original>D</original>
    <variation>A</variation>
    <location>
        <position position="247"/>
    </location>
</feature>
<feature type="mutagenesis site" description="About 60% magnetic response." evidence="6">
    <location>
        <begin position="288"/>
        <end position="297"/>
    </location>
</feature>
<feature type="mutagenesis site" description="About 40% magnetic response." evidence="6">
    <location>
        <begin position="293"/>
        <end position="297"/>
    </location>
</feature>
<feature type="sequence conflict" description="In Ref. 1; AAL09999/CAJ30127 and 4; CAM78034." evidence="11" ref="1 4">
    <original>H</original>
    <variation>R</variation>
    <location>
        <position position="193"/>
    </location>
</feature>
<evidence type="ECO:0000250" key="1">
    <source>
        <dbReference type="UniProtKB" id="W6KHH6"/>
    </source>
</evidence>
<evidence type="ECO:0000255" key="2"/>
<evidence type="ECO:0000269" key="3">
    <source>
    </source>
</evidence>
<evidence type="ECO:0000269" key="4">
    <source>
    </source>
</evidence>
<evidence type="ECO:0000269" key="5">
    <source>
    </source>
</evidence>
<evidence type="ECO:0000269" key="6">
    <source>
    </source>
</evidence>
<evidence type="ECO:0000269" key="7">
    <source>
    </source>
</evidence>
<evidence type="ECO:0000269" key="8">
    <source>
    </source>
</evidence>
<evidence type="ECO:0000269" key="9">
    <source>
    </source>
</evidence>
<evidence type="ECO:0000303" key="10">
    <source>
    </source>
</evidence>
<evidence type="ECO:0000305" key="11"/>
<evidence type="ECO:0000305" key="12">
    <source>
    </source>
</evidence>
<evidence type="ECO:0000305" key="13">
    <source>
    </source>
</evidence>
<evidence type="ECO:0000305" key="14">
    <source>
    </source>
</evidence>
<evidence type="ECO:0000305" key="15">
    <source>
    </source>
</evidence>
<organism>
    <name type="scientific">Magnetospirillum gryphiswaldense (strain DSM 6361 / JCM 21280 / NBRC 15271 / MSR-1)</name>
    <dbReference type="NCBI Taxonomy" id="431944"/>
    <lineage>
        <taxon>Bacteria</taxon>
        <taxon>Pseudomonadati</taxon>
        <taxon>Pseudomonadota</taxon>
        <taxon>Alphaproteobacteria</taxon>
        <taxon>Rhodospirillales</taxon>
        <taxon>Rhodospirillaceae</taxon>
        <taxon>Magnetospirillum</taxon>
    </lineage>
</organism>
<keyword id="KW-0091">Biomineralization</keyword>
<keyword id="KW-0997">Cell inner membrane</keyword>
<keyword id="KW-1003">Cell membrane</keyword>
<keyword id="KW-0903">Direct protein sequencing</keyword>
<keyword id="KW-0406">Ion transport</keyword>
<keyword id="KW-0408">Iron</keyword>
<keyword id="KW-0410">Iron transport</keyword>
<keyword id="KW-1281">Magnetosome</keyword>
<keyword id="KW-0472">Membrane</keyword>
<keyword id="KW-0479">Metal-binding</keyword>
<keyword id="KW-1185">Reference proteome</keyword>
<keyword id="KW-0812">Transmembrane</keyword>
<keyword id="KW-1133">Transmembrane helix</keyword>
<keyword id="KW-0813">Transport</keyword>
<name>MAMB_MAGGM</name>
<gene>
    <name evidence="10" type="primary">mamB</name>
    <name type="ordered locus">MGMSRv2__2368</name>
    <name type="ORF">mgI499</name>
    <name type="ORF">MGR_4102</name>
</gene>
<accession>V6F510</accession>
<accession>Q6NE50</accession>
<accession>Q93DY6</accession>
<comment type="function">
    <text evidence="6 8 9 14 15">Plays a dual, essential role in magnetosome formation; required for magnetosome vesicle formation as well as biomineralization (Probable) (PubMed:29243866). Requires heterodimerization with MamM for stability (PubMed:22007638). Probably binds and transports iron (Probable). One of 7 genes (mamLQBIEMO) able to induce magnetosome membrane biogenesis; coexpression of mamLQRBIEMO in a deletion of the 17 gene mamAB operon restores magnetosome vesicle formation but not magnetite biosynthesis (PubMed:27286560).</text>
</comment>
<comment type="subunit">
    <text evidence="6 9 14">Forms homodimers via its C-terminal domain, may form higher order multimers that are sensitive to reducing agent. Probably interacts with MamE (Probable). Interacts with MamM via their C-terminal domains (PubMed:22007638, PubMed:29243866).</text>
</comment>
<comment type="subcellular location">
    <subcellularLocation>
        <location evidence="14">Cell inner membrane</location>
        <topology evidence="2">Multi-pass membrane protein</topology>
    </subcellularLocation>
    <subcellularLocation>
        <location evidence="3 5 6">Magnetosome membrane</location>
        <topology evidence="2">Multi-pass membrane protein</topology>
    </subcellularLocation>
    <text evidence="3 6">Purified magnetosomes remain attached to each other (PubMed:11571158). Tagged protein has several locations; most is in 1-3 dots in the cell, also seen as patchy membrane localization, while about 20% localizes with magnetosomes in a straight line running through the center of the cell (PubMed:22007638).</text>
</comment>
<comment type="developmental stage">
    <text evidence="8">Upon induction in a non-magnetic deletion mutant this protein is first found in the cell inner membrane, then collects into foci along the entire cell length from which magnetosome vesicle formation and subsequent clustering occur (at protein level).</text>
</comment>
<comment type="induction">
    <text evidence="13">Part of the probable 17 gene mamAB operon.</text>
</comment>
<comment type="domain">
    <text evidence="1 15">The C-terminal domain (CTD) is probably responsible for hetero- and homodimerization and binds 1 Fe cation per subunit (Probable). The CTD assumes a V-shaped, dimeric metallo-chaperone-like fold (By similarity).</text>
</comment>
<comment type="disruption phenotype">
    <text evidence="4 6 8 9">The most severe single mam gene deletion. Single gene disruption has no accumulation of magnetite, no intracellular magnetosome vesicles form, wild type levels of MamM, mislocation of MamC in 1-3 foci, MamI mislocalized in 1 to a few patches (PubMed:22007638, PubMed:27286560, PubMed:29243866). Deletion of approximately 80 kb of DNA, including this operon, leads to cells that are non-magnetic, lack internal membrane systems, grow poorly, have reduced mobility and take-up and accumulate iron poorly (PubMed:13129949).</text>
</comment>
<comment type="miscellaneous">
    <text evidence="12">This bacteria makes up to 60 cubo-octahedral magnetosomes of about 45 nm in diameter which contain membrane-bound crystals of magnetite (Fe(3)O(4)).</text>
</comment>
<comment type="miscellaneous">
    <text evidence="7">Expression of just the minimal mamAB gene cluster (MGMSRv2__2365 to MGMSRv2__2381), including this gene, is sufficient to form a minimal magnetosome chain with small magnetite particles.</text>
</comment>
<comment type="similarity">
    <text evidence="14">Belongs to the cation diffusion facilitator (CDF) transporter (TC 2.A.4) family.</text>
</comment>
<comment type="online information" name="Protein Spotlight">
    <link uri="https://www.proteinspotlight.org/back_issues/217/"/>
    <text>A sense of direction - Issue 217 of September 2019</text>
</comment>
<dbReference type="EMBL" id="AF374354">
    <property type="protein sequence ID" value="AAL09999.1"/>
    <property type="molecule type" value="Genomic_DNA"/>
</dbReference>
<dbReference type="EMBL" id="BX571797">
    <property type="protein sequence ID" value="CAE12043.1"/>
    <property type="molecule type" value="Genomic_DNA"/>
</dbReference>
<dbReference type="EMBL" id="AM085146">
    <property type="protein sequence ID" value="CAJ30127.1"/>
    <property type="molecule type" value="Genomic_DNA"/>
</dbReference>
<dbReference type="EMBL" id="CU459003">
    <property type="protein sequence ID" value="CAM78034.1"/>
    <property type="molecule type" value="Genomic_DNA"/>
</dbReference>
<dbReference type="EMBL" id="HG794546">
    <property type="protein sequence ID" value="CDK99583.1"/>
    <property type="molecule type" value="Genomic_DNA"/>
</dbReference>
<dbReference type="SMR" id="V6F510"/>
<dbReference type="STRING" id="1430440.MGMSRv2__2368"/>
<dbReference type="TCDB" id="2.A.4.7.3">
    <property type="family name" value="the cation diffusion facilitator (cdf) family"/>
</dbReference>
<dbReference type="KEGG" id="mgy:MGMSRv2__2368"/>
<dbReference type="eggNOG" id="COG0053">
    <property type="taxonomic scope" value="Bacteria"/>
</dbReference>
<dbReference type="HOGENOM" id="CLU_013430_3_3_5"/>
<dbReference type="Proteomes" id="UP000018922">
    <property type="component" value="Chromosome I"/>
</dbReference>
<dbReference type="GO" id="GO:0110146">
    <property type="term" value="C:magnetosome membrane"/>
    <property type="evidence" value="ECO:0000314"/>
    <property type="project" value="UniProtKB"/>
</dbReference>
<dbReference type="GO" id="GO:0005886">
    <property type="term" value="C:plasma membrane"/>
    <property type="evidence" value="ECO:0007669"/>
    <property type="project" value="UniProtKB-SubCell"/>
</dbReference>
<dbReference type="GO" id="GO:0046872">
    <property type="term" value="F:metal ion binding"/>
    <property type="evidence" value="ECO:0007669"/>
    <property type="project" value="UniProtKB-KW"/>
</dbReference>
<dbReference type="GO" id="GO:0008324">
    <property type="term" value="F:monoatomic cation transmembrane transporter activity"/>
    <property type="evidence" value="ECO:0007669"/>
    <property type="project" value="InterPro"/>
</dbReference>
<dbReference type="GO" id="GO:0006826">
    <property type="term" value="P:iron ion transport"/>
    <property type="evidence" value="ECO:0007669"/>
    <property type="project" value="UniProtKB-KW"/>
</dbReference>
<dbReference type="FunFam" id="3.30.70.1350:FF:000016">
    <property type="entry name" value="Co/Zn/Cd cation transporter"/>
    <property type="match status" value="1"/>
</dbReference>
<dbReference type="FunFam" id="1.20.1510.10:FF:000006">
    <property type="entry name" value="Divalent cation efflux transporter"/>
    <property type="match status" value="1"/>
</dbReference>
<dbReference type="Gene3D" id="1.20.1510.10">
    <property type="entry name" value="Cation efflux protein transmembrane domain"/>
    <property type="match status" value="1"/>
</dbReference>
<dbReference type="Gene3D" id="3.30.70.1350">
    <property type="entry name" value="Cation efflux protein, cytoplasmic domain"/>
    <property type="match status" value="1"/>
</dbReference>
<dbReference type="InterPro" id="IPR002524">
    <property type="entry name" value="Cation_efflux"/>
</dbReference>
<dbReference type="InterPro" id="IPR027470">
    <property type="entry name" value="Cation_efflux_CTD"/>
</dbReference>
<dbReference type="InterPro" id="IPR036837">
    <property type="entry name" value="Cation_efflux_CTD_sf"/>
</dbReference>
<dbReference type="InterPro" id="IPR027469">
    <property type="entry name" value="Cation_efflux_TMD_sf"/>
</dbReference>
<dbReference type="InterPro" id="IPR050291">
    <property type="entry name" value="CDF_Transporter"/>
</dbReference>
<dbReference type="InterPro" id="IPR053436">
    <property type="entry name" value="Magnetosome_CDF_Transporter"/>
</dbReference>
<dbReference type="NCBIfam" id="TIGR01297">
    <property type="entry name" value="CDF"/>
    <property type="match status" value="1"/>
</dbReference>
<dbReference type="NCBIfam" id="NF033616">
    <property type="entry name" value="CDF_MamB"/>
    <property type="match status" value="1"/>
</dbReference>
<dbReference type="PANTHER" id="PTHR43840">
    <property type="entry name" value="MITOCHONDRIAL METAL TRANSPORTER 1-RELATED"/>
    <property type="match status" value="1"/>
</dbReference>
<dbReference type="PANTHER" id="PTHR43840:SF15">
    <property type="entry name" value="MITOCHONDRIAL METAL TRANSPORTER 1-RELATED"/>
    <property type="match status" value="1"/>
</dbReference>
<dbReference type="Pfam" id="PF01545">
    <property type="entry name" value="Cation_efflux"/>
    <property type="match status" value="1"/>
</dbReference>
<dbReference type="Pfam" id="PF16916">
    <property type="entry name" value="ZT_dimer"/>
    <property type="match status" value="1"/>
</dbReference>
<dbReference type="SUPFAM" id="SSF160240">
    <property type="entry name" value="Cation efflux protein cytoplasmic domain-like"/>
    <property type="match status" value="1"/>
</dbReference>
<dbReference type="SUPFAM" id="SSF161111">
    <property type="entry name" value="Cation efflux protein transmembrane domain-like"/>
    <property type="match status" value="1"/>
</dbReference>
<protein>
    <recommendedName>
        <fullName evidence="11">Magnetosome protein MamB</fullName>
    </recommendedName>
    <alternativeName>
        <fullName evidence="10">MM33.3</fullName>
    </alternativeName>
    <alternativeName>
        <fullName evidence="11">Probable iron transporter MamB</fullName>
    </alternativeName>
</protein>
<sequence>MKFENCRDCREEVVWWAFTADICMTLFKGILGLMSGSVALVADSLHSGADVVASGVTQLSLKISNKPADERYPFGYGNIQYISSAIVGSLLLIGASFLMYGSVVKLISGTYEAPSIFAALGASVTVIVNELMYRYQICVGNENNSPAIIANAWDNRSDAISSAAVMVGVIASVIGFPIADTIAAIGVSALVGHIGLELIGKAVHGLMDSSVDTELLQTAWQIATDTPLVHSIYFLRGRHVGEDVQFDIRLRVDPNLRIKDSSMVAEAVRQRIQDEIPHARDIRLFVSPAPAAVTVRV</sequence>